<name>LCPB_CORGL</name>
<sequence length="414" mass="44610">MDSPGQGEIARDSQGRPILDRYGRPVRVRPQPRQTPPTPRTPPVNETRVYQPRQTPPRQTPPRQTPPRQMPPRQTPPRQVPPQQQYQQPGQIGQVRPQPPVIAGDGGRRRKAISFKPRGCLGTIAGVLAVGLVLVFVVTLWADSKLNRVDATPATQVANTAGTNWLLVGSDSRQGLSDEDIERLGTGGDIGVGRTDTIMVLHMPRTGEPTLLSIPRDSYVNVPGWGMDKANAAFTVGGPELLTQTVEEATGLRIDHYAEIGMGGLANMVDAVGGVEMCPAEPMYDPLANLDIQAGCQEFDGAAALGYVRTRATALGDLDRVVRQREFFSALLSTATSPGTLLNPFRTFPMISNAVGTFTVGEGDHVWHLARLALAMRGGIVTETVPIASFADYDVGNVAIWDEAGAEALFSSMR</sequence>
<reference key="1">
    <citation type="journal article" date="2003" name="Appl. Microbiol. Biotechnol.">
        <title>The Corynebacterium glutamicum genome: features and impacts on biotechnological processes.</title>
        <authorList>
            <person name="Ikeda M."/>
            <person name="Nakagawa S."/>
        </authorList>
    </citation>
    <scope>NUCLEOTIDE SEQUENCE [LARGE SCALE GENOMIC DNA]</scope>
    <source>
        <strain>ATCC 13032 / DSM 20300 / JCM 1318 / BCRC 11384 / CCUG 27702 / LMG 3730 / NBRC 12168 / NCIMB 10025 / NRRL B-2784 / 534</strain>
    </source>
</reference>
<reference key="2">
    <citation type="journal article" date="2013" name="BMC Biol.">
        <title>IpsA, a novel LacI-type regulator, is required for inositol-derived lipid formation in Corynebacteria and Mycobacteria.</title>
        <authorList>
            <person name="Baumgart M."/>
            <person name="Luder K."/>
            <person name="Grover S."/>
            <person name="Gaetgens C."/>
            <person name="Besra G.S."/>
            <person name="Frunzke J."/>
        </authorList>
    </citation>
    <scope>INDUCTION</scope>
    <source>
        <strain>ATCC 13032 / DSM 20300 / JCM 1318 / BCRC 11384 / CCUG 27702 / LMG 3730 / NBRC 12168 / NCIMB 10025 / NRRL B-2784 / 534</strain>
    </source>
</reference>
<reference key="3">
    <citation type="journal article" date="2016" name="J. Bacteriol.">
        <title>Impact of LytR-CpsA-Psr proteins on cell wall biosynthesis in Corynebacterium glutamicum.</title>
        <authorList>
            <person name="Baumgart M."/>
            <person name="Schubert K."/>
            <person name="Bramkamp M."/>
            <person name="Frunzke J."/>
        </authorList>
    </citation>
    <scope>SUBCELLULAR LOCATION</scope>
    <scope>DISRUPTION PHENOTYPE</scope>
    <source>
        <strain>ATCC 13032 / DSM 20300 / JCM 1318 / BCRC 11384 / CCUG 27702 / LMG 3730 / NBRC 12168 / NCIMB 10025 / NRRL B-2784 / 534</strain>
    </source>
</reference>
<comment type="subcellular location">
    <subcellularLocation>
        <location evidence="4">Cell inner membrane</location>
        <topology evidence="1">Single-pass membrane protein</topology>
    </subcellularLocation>
    <text evidence="4">Localizes at regions of strong cell wall biosynthesis, such as the poles and the division plane.</text>
</comment>
<comment type="induction">
    <text evidence="3">Transcriptionally regulated by IpsA.</text>
</comment>
<comment type="disruption phenotype">
    <text evidence="4">Deletion mutant does not show any growth-related or morphological phenotype under the tested conditions.</text>
</comment>
<comment type="similarity">
    <text evidence="6">Belongs to the LytR/CpsA/Psr (LCP) family.</text>
</comment>
<comment type="sequence caution" evidence="7">
    <conflict type="erroneous initiation">
        <sequence resource="EMBL-CDS" id="BAC00296"/>
    </conflict>
    <text>Truncated N-terminus.</text>
</comment>
<gene>
    <name evidence="5" type="primary">lcpB</name>
    <name evidence="8" type="ordered locus">Cgl2902</name>
</gene>
<dbReference type="EMBL" id="BA000036">
    <property type="protein sequence ID" value="BAC00296.1"/>
    <property type="status" value="ALT_INIT"/>
    <property type="molecule type" value="Genomic_DNA"/>
</dbReference>
<dbReference type="RefSeq" id="NP_602092.2">
    <property type="nucleotide sequence ID" value="NC_003450.3"/>
</dbReference>
<dbReference type="SMR" id="Q8NLN8"/>
<dbReference type="STRING" id="196627.cg3210"/>
<dbReference type="KEGG" id="cgb:cg3210"/>
<dbReference type="KEGG" id="cgl:Cgl2902"/>
<dbReference type="PATRIC" id="fig|196627.13.peg.2832"/>
<dbReference type="eggNOG" id="COG1316">
    <property type="taxonomic scope" value="Bacteria"/>
</dbReference>
<dbReference type="HOGENOM" id="CLU_016455_0_1_11"/>
<dbReference type="OrthoDB" id="9782542at2"/>
<dbReference type="BioCyc" id="CORYNE:G18NG-12520-MONOMER"/>
<dbReference type="Proteomes" id="UP000000582">
    <property type="component" value="Chromosome"/>
</dbReference>
<dbReference type="GO" id="GO:0005886">
    <property type="term" value="C:plasma membrane"/>
    <property type="evidence" value="ECO:0007669"/>
    <property type="project" value="UniProtKB-SubCell"/>
</dbReference>
<dbReference type="GO" id="GO:0071555">
    <property type="term" value="P:cell wall organization"/>
    <property type="evidence" value="ECO:0007669"/>
    <property type="project" value="UniProtKB-KW"/>
</dbReference>
<dbReference type="Gene3D" id="3.40.630.190">
    <property type="entry name" value="LCP protein"/>
    <property type="match status" value="1"/>
</dbReference>
<dbReference type="InterPro" id="IPR050922">
    <property type="entry name" value="LytR/CpsA/Psr_CW_biosynth"/>
</dbReference>
<dbReference type="InterPro" id="IPR004474">
    <property type="entry name" value="LytR_CpsA_psr"/>
</dbReference>
<dbReference type="NCBIfam" id="TIGR00350">
    <property type="entry name" value="lytR_cpsA_psr"/>
    <property type="match status" value="1"/>
</dbReference>
<dbReference type="PANTHER" id="PTHR33392">
    <property type="entry name" value="POLYISOPRENYL-TEICHOIC ACID--PEPTIDOGLYCAN TEICHOIC ACID TRANSFERASE TAGU"/>
    <property type="match status" value="1"/>
</dbReference>
<dbReference type="PANTHER" id="PTHR33392:SF6">
    <property type="entry name" value="POLYISOPRENYL-TEICHOIC ACID--PEPTIDOGLYCAN TEICHOIC ACID TRANSFERASE TAGU"/>
    <property type="match status" value="1"/>
</dbReference>
<dbReference type="Pfam" id="PF03816">
    <property type="entry name" value="LytR_cpsA_psr"/>
    <property type="match status" value="1"/>
</dbReference>
<dbReference type="SUPFAM" id="SSF81995">
    <property type="entry name" value="beta-sandwich domain of Sec23/24"/>
    <property type="match status" value="1"/>
</dbReference>
<keyword id="KW-0997">Cell inner membrane</keyword>
<keyword id="KW-1003">Cell membrane</keyword>
<keyword id="KW-0961">Cell wall biogenesis/degradation</keyword>
<keyword id="KW-0472">Membrane</keyword>
<keyword id="KW-1185">Reference proteome</keyword>
<keyword id="KW-0812">Transmembrane</keyword>
<keyword id="KW-1133">Transmembrane helix</keyword>
<feature type="chain" id="PRO_0000442347" description="Probable cell wall biosynthesis protein LcpB">
    <location>
        <begin position="1"/>
        <end position="414"/>
    </location>
</feature>
<feature type="topological domain" description="Cytoplasmic" evidence="7">
    <location>
        <begin position="1"/>
        <end position="120"/>
    </location>
</feature>
<feature type="transmembrane region" description="Helical" evidence="1">
    <location>
        <begin position="121"/>
        <end position="141"/>
    </location>
</feature>
<feature type="topological domain" description="Periplasmic" evidence="7">
    <location>
        <begin position="142"/>
        <end position="414"/>
    </location>
</feature>
<feature type="region of interest" description="Disordered" evidence="2">
    <location>
        <begin position="1"/>
        <end position="108"/>
    </location>
</feature>
<feature type="compositionally biased region" description="Basic and acidic residues" evidence="2">
    <location>
        <begin position="9"/>
        <end position="23"/>
    </location>
</feature>
<feature type="compositionally biased region" description="Pro residues" evidence="2">
    <location>
        <begin position="33"/>
        <end position="42"/>
    </location>
</feature>
<feature type="compositionally biased region" description="Low complexity" evidence="2">
    <location>
        <begin position="43"/>
        <end position="53"/>
    </location>
</feature>
<feature type="compositionally biased region" description="Pro residues" evidence="2">
    <location>
        <begin position="54"/>
        <end position="80"/>
    </location>
</feature>
<organism>
    <name type="scientific">Corynebacterium glutamicum (strain ATCC 13032 / DSM 20300 / JCM 1318 / BCRC 11384 / CCUG 27702 / LMG 3730 / NBRC 12168 / NCIMB 10025 / NRRL B-2784 / 534)</name>
    <dbReference type="NCBI Taxonomy" id="196627"/>
    <lineage>
        <taxon>Bacteria</taxon>
        <taxon>Bacillati</taxon>
        <taxon>Actinomycetota</taxon>
        <taxon>Actinomycetes</taxon>
        <taxon>Mycobacteriales</taxon>
        <taxon>Corynebacteriaceae</taxon>
        <taxon>Corynebacterium</taxon>
    </lineage>
</organism>
<accession>Q8NLN8</accession>
<protein>
    <recommendedName>
        <fullName evidence="6">Probable cell wall biosynthesis protein LcpB</fullName>
    </recommendedName>
</protein>
<proteinExistence type="evidence at transcript level"/>
<evidence type="ECO:0000255" key="1"/>
<evidence type="ECO:0000256" key="2">
    <source>
        <dbReference type="SAM" id="MobiDB-lite"/>
    </source>
</evidence>
<evidence type="ECO:0000269" key="3">
    <source>
    </source>
</evidence>
<evidence type="ECO:0000269" key="4">
    <source>
    </source>
</evidence>
<evidence type="ECO:0000303" key="5">
    <source>
    </source>
</evidence>
<evidence type="ECO:0000305" key="6"/>
<evidence type="ECO:0000305" key="7">
    <source>
    </source>
</evidence>
<evidence type="ECO:0000312" key="8">
    <source>
        <dbReference type="EMBL" id="BAC00296.1"/>
    </source>
</evidence>